<dbReference type="EMBL" id="CP000880">
    <property type="protein sequence ID" value="ABX20522.1"/>
    <property type="molecule type" value="Genomic_DNA"/>
</dbReference>
<dbReference type="STRING" id="41514.SARI_00596"/>
<dbReference type="KEGG" id="ses:SARI_00596"/>
<dbReference type="HOGENOM" id="CLU_1843687_0_0_6"/>
<dbReference type="UniPathway" id="UPA00030"/>
<dbReference type="Proteomes" id="UP000002084">
    <property type="component" value="Chromosome"/>
</dbReference>
<dbReference type="GO" id="GO:0005886">
    <property type="term" value="C:plasma membrane"/>
    <property type="evidence" value="ECO:0007669"/>
    <property type="project" value="UniProtKB-SubCell"/>
</dbReference>
<dbReference type="GO" id="GO:0009245">
    <property type="term" value="P:lipid A biosynthetic process"/>
    <property type="evidence" value="ECO:0007669"/>
    <property type="project" value="UniProtKB-KW"/>
</dbReference>
<dbReference type="GO" id="GO:0009103">
    <property type="term" value="P:lipopolysaccharide biosynthetic process"/>
    <property type="evidence" value="ECO:0007669"/>
    <property type="project" value="UniProtKB-UniPathway"/>
</dbReference>
<feature type="chain" id="PRO_0000382016" description="Putative 4-amino-4-deoxy-L-arabinose-phosphoundecaprenol flippase subunit ArnF">
    <location>
        <begin position="1"/>
        <end position="139"/>
    </location>
</feature>
<feature type="transmembrane region" description="Helical" evidence="2">
    <location>
        <begin position="2"/>
        <end position="22"/>
    </location>
</feature>
<feature type="transmembrane region" description="Helical" evidence="2">
    <location>
        <begin position="34"/>
        <end position="54"/>
    </location>
</feature>
<feature type="transmembrane region" description="Helical" evidence="2">
    <location>
        <begin position="68"/>
        <end position="90"/>
    </location>
</feature>
<protein>
    <recommendedName>
        <fullName>Putative 4-amino-4-deoxy-L-arabinose-phosphoundecaprenol flippase subunit ArnF</fullName>
        <shortName>L-Ara4N-phosphoundecaprenol flippase subunit ArnF</shortName>
    </recommendedName>
    <alternativeName>
        <fullName>Undecaprenyl phosphate-aminoarabinose flippase subunit ArnF</fullName>
    </alternativeName>
</protein>
<evidence type="ECO:0000250" key="1"/>
<evidence type="ECO:0000255" key="2"/>
<evidence type="ECO:0000305" key="3"/>
<evidence type="ECO:0000305" key="4">
    <source ref="1"/>
</evidence>
<keyword id="KW-0997">Cell inner membrane</keyword>
<keyword id="KW-1003">Cell membrane</keyword>
<keyword id="KW-0441">Lipid A biosynthesis</keyword>
<keyword id="KW-0444">Lipid biosynthesis</keyword>
<keyword id="KW-0443">Lipid metabolism</keyword>
<keyword id="KW-0448">Lipopolysaccharide biosynthesis</keyword>
<keyword id="KW-0472">Membrane</keyword>
<keyword id="KW-1185">Reference proteome</keyword>
<keyword id="KW-0812">Transmembrane</keyword>
<keyword id="KW-1133">Transmembrane helix</keyword>
<keyword id="KW-0813">Transport</keyword>
<gene>
    <name type="primary">arnF</name>
    <name type="ordered locus">SARI_00596</name>
</gene>
<proteinExistence type="inferred from homology"/>
<reference key="1">
    <citation type="submission" date="2007-11" db="EMBL/GenBank/DDBJ databases">
        <authorList>
            <consortium name="The Salmonella enterica serovar Arizonae Genome Sequencing Project"/>
            <person name="McClelland M."/>
            <person name="Sanderson E.K."/>
            <person name="Porwollik S."/>
            <person name="Spieth J."/>
            <person name="Clifton W.S."/>
            <person name="Fulton R."/>
            <person name="Chunyan W."/>
            <person name="Wollam A."/>
            <person name="Shah N."/>
            <person name="Pepin K."/>
            <person name="Bhonagiri V."/>
            <person name="Nash W."/>
            <person name="Johnson M."/>
            <person name="Thiruvilangam P."/>
            <person name="Wilson R."/>
        </authorList>
    </citation>
    <scope>NUCLEOTIDE SEQUENCE [LARGE SCALE GENOMIC DNA]</scope>
    <source>
        <strain>ATCC BAA-731 / CDC346-86 / RSK2980</strain>
    </source>
</reference>
<comment type="function">
    <text evidence="1">Translocates 4-amino-4-deoxy-L-arabinose-phosphoundecaprenol (alpha-L-Ara4N-phosphoundecaprenol) from the cytoplasmic to the periplasmic side of the inner membrane.</text>
</comment>
<comment type="pathway">
    <text>Bacterial outer membrane biogenesis; lipopolysaccharide biosynthesis.</text>
</comment>
<comment type="subunit">
    <text evidence="1">Heterodimer of ArnE and ArnF.</text>
</comment>
<comment type="subcellular location">
    <subcellularLocation>
        <location evidence="2">Cell inner membrane</location>
        <topology evidence="2">Multi-pass membrane protein</topology>
    </subcellularLocation>
</comment>
<comment type="similarity">
    <text evidence="3">Belongs to the ArnF family.</text>
</comment>
<comment type="caution">
    <text evidence="4">Compared to other bacterial ArnF, it has a divergent C-terminal domain. The upstream arnE gene has a premature stop codon and an internal deletion; as the 2 proteins form a heterodimer, ArnF probably does not accumulate to high levels.</text>
</comment>
<accession>A9MJC2</accession>
<name>ARNF_SALAR</name>
<organism>
    <name type="scientific">Salmonella arizonae (strain ATCC BAA-731 / CDC346-86 / RSK2980)</name>
    <dbReference type="NCBI Taxonomy" id="41514"/>
    <lineage>
        <taxon>Bacteria</taxon>
        <taxon>Pseudomonadati</taxon>
        <taxon>Pseudomonadota</taxon>
        <taxon>Gammaproteobacteria</taxon>
        <taxon>Enterobacterales</taxon>
        <taxon>Enterobacteriaceae</taxon>
        <taxon>Salmonella</taxon>
    </lineage>
</organism>
<sequence length="139" mass="15023">MGVMWGLISVAIASLAQLSLGFSMMRLPSIAHPLAFIAGLGAFTTATLALFAGLAGYLIPVSCWQKTLHSLALSKTYALLSLSYVLVRVVTRSVRRFLSKSDARRIVHCGGDNADFPARQLMMACASTAAIRRRNNIEH</sequence>